<feature type="chain" id="PRO_1000022491" description="Chorismate synthase">
    <location>
        <begin position="1"/>
        <end position="352"/>
    </location>
</feature>
<feature type="binding site" evidence="1">
    <location>
        <position position="48"/>
    </location>
    <ligand>
        <name>NADP(+)</name>
        <dbReference type="ChEBI" id="CHEBI:58349"/>
    </ligand>
</feature>
<feature type="binding site" evidence="1">
    <location>
        <begin position="125"/>
        <end position="127"/>
    </location>
    <ligand>
        <name>FMN</name>
        <dbReference type="ChEBI" id="CHEBI:58210"/>
    </ligand>
</feature>
<feature type="binding site" evidence="1">
    <location>
        <begin position="237"/>
        <end position="238"/>
    </location>
    <ligand>
        <name>FMN</name>
        <dbReference type="ChEBI" id="CHEBI:58210"/>
    </ligand>
</feature>
<feature type="binding site" evidence="1">
    <location>
        <position position="278"/>
    </location>
    <ligand>
        <name>FMN</name>
        <dbReference type="ChEBI" id="CHEBI:58210"/>
    </ligand>
</feature>
<feature type="binding site" evidence="1">
    <location>
        <begin position="293"/>
        <end position="297"/>
    </location>
    <ligand>
        <name>FMN</name>
        <dbReference type="ChEBI" id="CHEBI:58210"/>
    </ligand>
</feature>
<feature type="binding site" evidence="1">
    <location>
        <position position="319"/>
    </location>
    <ligand>
        <name>FMN</name>
        <dbReference type="ChEBI" id="CHEBI:58210"/>
    </ligand>
</feature>
<protein>
    <recommendedName>
        <fullName evidence="1">Chorismate synthase</fullName>
        <shortName evidence="1">CS</shortName>
        <ecNumber evidence="1">4.2.3.5</ecNumber>
    </recommendedName>
    <alternativeName>
        <fullName evidence="1">5-enolpyruvylshikimate-3-phosphate phospholyase</fullName>
    </alternativeName>
</protein>
<sequence>MSGNTFGKIFTVTTCGESHGDSLAAIIDGCPSNIPLCEAYIQLELDRRKPGQSKFTTQRKEPDEVKIISGVFEGKTTGTPIGLIIKNQDQKSKDYSEIKDKFRPGHADYTYFKKYGIRDYRGGGRSSARETAMRVAAGAIAKKILKHYGIEIYGFCSQIGSLKIDFIDKDFINQNPFFIANKNAVPACEDLIHSIRKQGDSIGAEVTVVATGLEAGLGRPVFDRLDASIAYAMMSINAVKAVSIGDGFDCVAQKGSQHRDEITQQQGFLSNHAGGILGGISTGQDIIAKLAFKPTSSILQPGKSIDVQGNDTTVITKGRHDPCVGIRGVPIAEAMLALVLVDELLITRSYRD</sequence>
<comment type="function">
    <text evidence="1">Catalyzes the anti-1,4-elimination of the C-3 phosphate and the C-6 proR hydrogen from 5-enolpyruvylshikimate-3-phosphate (EPSP) to yield chorismate, which is the branch point compound that serves as the starting substrate for the three terminal pathways of aromatic amino acid biosynthesis. This reaction introduces a second double bond into the aromatic ring system.</text>
</comment>
<comment type="catalytic activity">
    <reaction evidence="1">
        <text>5-O-(1-carboxyvinyl)-3-phosphoshikimate = chorismate + phosphate</text>
        <dbReference type="Rhea" id="RHEA:21020"/>
        <dbReference type="ChEBI" id="CHEBI:29748"/>
        <dbReference type="ChEBI" id="CHEBI:43474"/>
        <dbReference type="ChEBI" id="CHEBI:57701"/>
        <dbReference type="EC" id="4.2.3.5"/>
    </reaction>
</comment>
<comment type="cofactor">
    <cofactor evidence="1">
        <name>FMNH2</name>
        <dbReference type="ChEBI" id="CHEBI:57618"/>
    </cofactor>
    <text evidence="1">Reduced FMN (FMNH(2)).</text>
</comment>
<comment type="pathway">
    <text evidence="1">Metabolic intermediate biosynthesis; chorismate biosynthesis; chorismate from D-erythrose 4-phosphate and phosphoenolpyruvate: step 7/7.</text>
</comment>
<comment type="subunit">
    <text evidence="1">Homotetramer.</text>
</comment>
<comment type="similarity">
    <text evidence="1">Belongs to the chorismate synthase family.</text>
</comment>
<reference key="1">
    <citation type="journal article" date="2006" name="J. Bacteriol.">
        <title>Chromosome rearrangement and diversification of Francisella tularensis revealed by the type B (OSU18) genome sequence.</title>
        <authorList>
            <person name="Petrosino J.F."/>
            <person name="Xiang Q."/>
            <person name="Karpathy S.E."/>
            <person name="Jiang H."/>
            <person name="Yerrapragada S."/>
            <person name="Liu Y."/>
            <person name="Gioia J."/>
            <person name="Hemphill L."/>
            <person name="Gonzalez A."/>
            <person name="Raghavan T.M."/>
            <person name="Uzman A."/>
            <person name="Fox G.E."/>
            <person name="Highlander S."/>
            <person name="Reichard M."/>
            <person name="Morton R.J."/>
            <person name="Clinkenbeard K.D."/>
            <person name="Weinstock G.M."/>
        </authorList>
    </citation>
    <scope>NUCLEOTIDE SEQUENCE [LARGE SCALE GENOMIC DNA]</scope>
    <source>
        <strain>OSU18</strain>
    </source>
</reference>
<keyword id="KW-0028">Amino-acid biosynthesis</keyword>
<keyword id="KW-0057">Aromatic amino acid biosynthesis</keyword>
<keyword id="KW-0274">FAD</keyword>
<keyword id="KW-0285">Flavoprotein</keyword>
<keyword id="KW-0288">FMN</keyword>
<keyword id="KW-0456">Lyase</keyword>
<keyword id="KW-0521">NADP</keyword>
<accession>Q0BNG4</accession>
<gene>
    <name evidence="1" type="primary">aroC</name>
    <name type="ordered locus">FTH_0370</name>
</gene>
<dbReference type="EC" id="4.2.3.5" evidence="1"/>
<dbReference type="EMBL" id="CP000437">
    <property type="protein sequence ID" value="ABI82370.1"/>
    <property type="molecule type" value="Genomic_DNA"/>
</dbReference>
<dbReference type="RefSeq" id="WP_003014579.1">
    <property type="nucleotide sequence ID" value="NC_017463.1"/>
</dbReference>
<dbReference type="SMR" id="Q0BNG4"/>
<dbReference type="KEGG" id="fth:FTH_0370"/>
<dbReference type="UniPathway" id="UPA00053">
    <property type="reaction ID" value="UER00090"/>
</dbReference>
<dbReference type="GO" id="GO:0005829">
    <property type="term" value="C:cytosol"/>
    <property type="evidence" value="ECO:0007669"/>
    <property type="project" value="TreeGrafter"/>
</dbReference>
<dbReference type="GO" id="GO:0004107">
    <property type="term" value="F:chorismate synthase activity"/>
    <property type="evidence" value="ECO:0007669"/>
    <property type="project" value="UniProtKB-UniRule"/>
</dbReference>
<dbReference type="GO" id="GO:0010181">
    <property type="term" value="F:FMN binding"/>
    <property type="evidence" value="ECO:0007669"/>
    <property type="project" value="TreeGrafter"/>
</dbReference>
<dbReference type="GO" id="GO:0008652">
    <property type="term" value="P:amino acid biosynthetic process"/>
    <property type="evidence" value="ECO:0007669"/>
    <property type="project" value="UniProtKB-KW"/>
</dbReference>
<dbReference type="GO" id="GO:0009073">
    <property type="term" value="P:aromatic amino acid family biosynthetic process"/>
    <property type="evidence" value="ECO:0007669"/>
    <property type="project" value="UniProtKB-KW"/>
</dbReference>
<dbReference type="GO" id="GO:0009423">
    <property type="term" value="P:chorismate biosynthetic process"/>
    <property type="evidence" value="ECO:0007669"/>
    <property type="project" value="UniProtKB-UniRule"/>
</dbReference>
<dbReference type="CDD" id="cd07304">
    <property type="entry name" value="Chorismate_synthase"/>
    <property type="match status" value="1"/>
</dbReference>
<dbReference type="Gene3D" id="3.60.150.10">
    <property type="entry name" value="Chorismate synthase AroC"/>
    <property type="match status" value="1"/>
</dbReference>
<dbReference type="HAMAP" id="MF_00300">
    <property type="entry name" value="Chorismate_synth"/>
    <property type="match status" value="1"/>
</dbReference>
<dbReference type="InterPro" id="IPR000453">
    <property type="entry name" value="Chorismate_synth"/>
</dbReference>
<dbReference type="InterPro" id="IPR035904">
    <property type="entry name" value="Chorismate_synth_AroC_sf"/>
</dbReference>
<dbReference type="InterPro" id="IPR020541">
    <property type="entry name" value="Chorismate_synthase_CS"/>
</dbReference>
<dbReference type="NCBIfam" id="TIGR00033">
    <property type="entry name" value="aroC"/>
    <property type="match status" value="1"/>
</dbReference>
<dbReference type="NCBIfam" id="NF003793">
    <property type="entry name" value="PRK05382.1"/>
    <property type="match status" value="1"/>
</dbReference>
<dbReference type="PANTHER" id="PTHR21085">
    <property type="entry name" value="CHORISMATE SYNTHASE"/>
    <property type="match status" value="1"/>
</dbReference>
<dbReference type="PANTHER" id="PTHR21085:SF0">
    <property type="entry name" value="CHORISMATE SYNTHASE"/>
    <property type="match status" value="1"/>
</dbReference>
<dbReference type="Pfam" id="PF01264">
    <property type="entry name" value="Chorismate_synt"/>
    <property type="match status" value="1"/>
</dbReference>
<dbReference type="PIRSF" id="PIRSF001456">
    <property type="entry name" value="Chorismate_synth"/>
    <property type="match status" value="1"/>
</dbReference>
<dbReference type="SUPFAM" id="SSF103263">
    <property type="entry name" value="Chorismate synthase, AroC"/>
    <property type="match status" value="1"/>
</dbReference>
<dbReference type="PROSITE" id="PS00787">
    <property type="entry name" value="CHORISMATE_SYNTHASE_1"/>
    <property type="match status" value="1"/>
</dbReference>
<dbReference type="PROSITE" id="PS00788">
    <property type="entry name" value="CHORISMATE_SYNTHASE_2"/>
    <property type="match status" value="1"/>
</dbReference>
<dbReference type="PROSITE" id="PS00789">
    <property type="entry name" value="CHORISMATE_SYNTHASE_3"/>
    <property type="match status" value="1"/>
</dbReference>
<evidence type="ECO:0000255" key="1">
    <source>
        <dbReference type="HAMAP-Rule" id="MF_00300"/>
    </source>
</evidence>
<proteinExistence type="inferred from homology"/>
<name>AROC_FRATO</name>
<organism>
    <name type="scientific">Francisella tularensis subsp. holarctica (strain OSU18)</name>
    <dbReference type="NCBI Taxonomy" id="393011"/>
    <lineage>
        <taxon>Bacteria</taxon>
        <taxon>Pseudomonadati</taxon>
        <taxon>Pseudomonadota</taxon>
        <taxon>Gammaproteobacteria</taxon>
        <taxon>Thiotrichales</taxon>
        <taxon>Francisellaceae</taxon>
        <taxon>Francisella</taxon>
    </lineage>
</organism>